<dbReference type="EC" id="6.3.2.8" evidence="1"/>
<dbReference type="EMBL" id="AL111168">
    <property type="protein sequence ID" value="CAL35172.1"/>
    <property type="molecule type" value="Genomic_DNA"/>
</dbReference>
<dbReference type="PIR" id="C81308">
    <property type="entry name" value="C81308"/>
</dbReference>
<dbReference type="RefSeq" id="WP_010891904.1">
    <property type="nucleotide sequence ID" value="NZ_SZUC01000001.1"/>
</dbReference>
<dbReference type="RefSeq" id="YP_002344449.1">
    <property type="nucleotide sequence ID" value="NC_002163.1"/>
</dbReference>
<dbReference type="SMR" id="Q9PNN7"/>
<dbReference type="IntAct" id="Q9PNN7">
    <property type="interactions" value="22"/>
</dbReference>
<dbReference type="STRING" id="192222.Cj1054c"/>
<dbReference type="PaxDb" id="192222-Cj1054c"/>
<dbReference type="EnsemblBacteria" id="CAL35172">
    <property type="protein sequence ID" value="CAL35172"/>
    <property type="gene ID" value="Cj1054c"/>
</dbReference>
<dbReference type="GeneID" id="905346"/>
<dbReference type="KEGG" id="cje:Cj1054c"/>
<dbReference type="PATRIC" id="fig|192222.6.peg.1036"/>
<dbReference type="eggNOG" id="COG0773">
    <property type="taxonomic scope" value="Bacteria"/>
</dbReference>
<dbReference type="HOGENOM" id="CLU_028104_2_2_7"/>
<dbReference type="OrthoDB" id="9804126at2"/>
<dbReference type="UniPathway" id="UPA00219"/>
<dbReference type="Proteomes" id="UP000000799">
    <property type="component" value="Chromosome"/>
</dbReference>
<dbReference type="GO" id="GO:0005737">
    <property type="term" value="C:cytoplasm"/>
    <property type="evidence" value="ECO:0007669"/>
    <property type="project" value="UniProtKB-SubCell"/>
</dbReference>
<dbReference type="GO" id="GO:0005524">
    <property type="term" value="F:ATP binding"/>
    <property type="evidence" value="ECO:0007669"/>
    <property type="project" value="UniProtKB-UniRule"/>
</dbReference>
<dbReference type="GO" id="GO:0008763">
    <property type="term" value="F:UDP-N-acetylmuramate-L-alanine ligase activity"/>
    <property type="evidence" value="ECO:0007669"/>
    <property type="project" value="UniProtKB-UniRule"/>
</dbReference>
<dbReference type="GO" id="GO:0051301">
    <property type="term" value="P:cell division"/>
    <property type="evidence" value="ECO:0007669"/>
    <property type="project" value="UniProtKB-KW"/>
</dbReference>
<dbReference type="GO" id="GO:0071555">
    <property type="term" value="P:cell wall organization"/>
    <property type="evidence" value="ECO:0007669"/>
    <property type="project" value="UniProtKB-KW"/>
</dbReference>
<dbReference type="GO" id="GO:0009252">
    <property type="term" value="P:peptidoglycan biosynthetic process"/>
    <property type="evidence" value="ECO:0007669"/>
    <property type="project" value="UniProtKB-UniRule"/>
</dbReference>
<dbReference type="GO" id="GO:0008360">
    <property type="term" value="P:regulation of cell shape"/>
    <property type="evidence" value="ECO:0007669"/>
    <property type="project" value="UniProtKB-KW"/>
</dbReference>
<dbReference type="Gene3D" id="3.90.190.20">
    <property type="entry name" value="Mur ligase, C-terminal domain"/>
    <property type="match status" value="1"/>
</dbReference>
<dbReference type="Gene3D" id="3.40.1190.10">
    <property type="entry name" value="Mur-like, catalytic domain"/>
    <property type="match status" value="1"/>
</dbReference>
<dbReference type="Gene3D" id="3.40.50.720">
    <property type="entry name" value="NAD(P)-binding Rossmann-like Domain"/>
    <property type="match status" value="1"/>
</dbReference>
<dbReference type="HAMAP" id="MF_00046">
    <property type="entry name" value="MurC"/>
    <property type="match status" value="1"/>
</dbReference>
<dbReference type="InterPro" id="IPR036565">
    <property type="entry name" value="Mur-like_cat_sf"/>
</dbReference>
<dbReference type="InterPro" id="IPR004101">
    <property type="entry name" value="Mur_ligase_C"/>
</dbReference>
<dbReference type="InterPro" id="IPR036615">
    <property type="entry name" value="Mur_ligase_C_dom_sf"/>
</dbReference>
<dbReference type="InterPro" id="IPR013221">
    <property type="entry name" value="Mur_ligase_cen"/>
</dbReference>
<dbReference type="InterPro" id="IPR000713">
    <property type="entry name" value="Mur_ligase_N"/>
</dbReference>
<dbReference type="InterPro" id="IPR050061">
    <property type="entry name" value="MurCDEF_pg_biosynth"/>
</dbReference>
<dbReference type="InterPro" id="IPR005758">
    <property type="entry name" value="UDP-N-AcMur_Ala_ligase_MurC"/>
</dbReference>
<dbReference type="NCBIfam" id="TIGR01082">
    <property type="entry name" value="murC"/>
    <property type="match status" value="1"/>
</dbReference>
<dbReference type="PANTHER" id="PTHR43445:SF3">
    <property type="entry name" value="UDP-N-ACETYLMURAMATE--L-ALANINE LIGASE"/>
    <property type="match status" value="1"/>
</dbReference>
<dbReference type="PANTHER" id="PTHR43445">
    <property type="entry name" value="UDP-N-ACETYLMURAMATE--L-ALANINE LIGASE-RELATED"/>
    <property type="match status" value="1"/>
</dbReference>
<dbReference type="Pfam" id="PF01225">
    <property type="entry name" value="Mur_ligase"/>
    <property type="match status" value="1"/>
</dbReference>
<dbReference type="Pfam" id="PF02875">
    <property type="entry name" value="Mur_ligase_C"/>
    <property type="match status" value="1"/>
</dbReference>
<dbReference type="Pfam" id="PF08245">
    <property type="entry name" value="Mur_ligase_M"/>
    <property type="match status" value="1"/>
</dbReference>
<dbReference type="SUPFAM" id="SSF51984">
    <property type="entry name" value="MurCD N-terminal domain"/>
    <property type="match status" value="1"/>
</dbReference>
<dbReference type="SUPFAM" id="SSF53623">
    <property type="entry name" value="MurD-like peptide ligases, catalytic domain"/>
    <property type="match status" value="1"/>
</dbReference>
<dbReference type="SUPFAM" id="SSF53244">
    <property type="entry name" value="MurD-like peptide ligases, peptide-binding domain"/>
    <property type="match status" value="1"/>
</dbReference>
<sequence length="432" mass="48372">MMQNIHFIGIGGIGISALARFLREKGFKISGSDLKESKITKELEKEGVKVSIPHHKDNILNKDLVIYSAAIKEENPEFKYAKELGIKCLSRKEALPLILEDKRVFAVAGAHGKSTTSSILASLLDDASVIIGAILKEFGSNMIYKESQNLVFEADESDSSFLNSNPYLAIVTNAEAEHLDHYGNEVSKLHHAYTQFLDVAKIRVINAEDEFLKNYKNESIKLYPSKDIKNCTMCIENFKPFTSFELKDLGEFKVFGMGYHLALDASLAILAALNFLDIETIRTRLKNYQGIKKRFDILHADENLVLIDDYGHHPTEIKATLSAAQEYVKLGGYKKITAIFEPHRYTRLATNLKEFAKAFEGVDELVILPVYAAGEEPIELDLKAVFPKALFVEDIKREGKFLVASKGQVFEEGLIIGFGAGDISNKLRQKNE</sequence>
<evidence type="ECO:0000255" key="1">
    <source>
        <dbReference type="HAMAP-Rule" id="MF_00046"/>
    </source>
</evidence>
<accession>Q9PNN7</accession>
<accession>Q0P9J8</accession>
<gene>
    <name evidence="1" type="primary">murC</name>
    <name type="ordered locus">Cj1054c</name>
</gene>
<comment type="function">
    <text evidence="1">Cell wall formation.</text>
</comment>
<comment type="catalytic activity">
    <reaction evidence="1">
        <text>UDP-N-acetyl-alpha-D-muramate + L-alanine + ATP = UDP-N-acetyl-alpha-D-muramoyl-L-alanine + ADP + phosphate + H(+)</text>
        <dbReference type="Rhea" id="RHEA:23372"/>
        <dbReference type="ChEBI" id="CHEBI:15378"/>
        <dbReference type="ChEBI" id="CHEBI:30616"/>
        <dbReference type="ChEBI" id="CHEBI:43474"/>
        <dbReference type="ChEBI" id="CHEBI:57972"/>
        <dbReference type="ChEBI" id="CHEBI:70757"/>
        <dbReference type="ChEBI" id="CHEBI:83898"/>
        <dbReference type="ChEBI" id="CHEBI:456216"/>
        <dbReference type="EC" id="6.3.2.8"/>
    </reaction>
</comment>
<comment type="pathway">
    <text evidence="1">Cell wall biogenesis; peptidoglycan biosynthesis.</text>
</comment>
<comment type="subcellular location">
    <subcellularLocation>
        <location evidence="1">Cytoplasm</location>
    </subcellularLocation>
</comment>
<comment type="similarity">
    <text evidence="1">Belongs to the MurCDEF family.</text>
</comment>
<protein>
    <recommendedName>
        <fullName evidence="1">UDP-N-acetylmuramate--L-alanine ligase</fullName>
        <ecNumber evidence="1">6.3.2.8</ecNumber>
    </recommendedName>
    <alternativeName>
        <fullName evidence="1">UDP-N-acetylmuramoyl-L-alanine synthetase</fullName>
    </alternativeName>
</protein>
<proteinExistence type="inferred from homology"/>
<name>MURC_CAMJE</name>
<reference key="1">
    <citation type="journal article" date="2000" name="Nature">
        <title>The genome sequence of the food-borne pathogen Campylobacter jejuni reveals hypervariable sequences.</title>
        <authorList>
            <person name="Parkhill J."/>
            <person name="Wren B.W."/>
            <person name="Mungall K.L."/>
            <person name="Ketley J.M."/>
            <person name="Churcher C.M."/>
            <person name="Basham D."/>
            <person name="Chillingworth T."/>
            <person name="Davies R.M."/>
            <person name="Feltwell T."/>
            <person name="Holroyd S."/>
            <person name="Jagels K."/>
            <person name="Karlyshev A.V."/>
            <person name="Moule S."/>
            <person name="Pallen M.J."/>
            <person name="Penn C.W."/>
            <person name="Quail M.A."/>
            <person name="Rajandream M.A."/>
            <person name="Rutherford K.M."/>
            <person name="van Vliet A.H.M."/>
            <person name="Whitehead S."/>
            <person name="Barrell B.G."/>
        </authorList>
    </citation>
    <scope>NUCLEOTIDE SEQUENCE [LARGE SCALE GENOMIC DNA]</scope>
    <source>
        <strain>ATCC 700819 / NCTC 11168</strain>
    </source>
</reference>
<keyword id="KW-0067">ATP-binding</keyword>
<keyword id="KW-0131">Cell cycle</keyword>
<keyword id="KW-0132">Cell division</keyword>
<keyword id="KW-0133">Cell shape</keyword>
<keyword id="KW-0961">Cell wall biogenesis/degradation</keyword>
<keyword id="KW-0963">Cytoplasm</keyword>
<keyword id="KW-0436">Ligase</keyword>
<keyword id="KW-0547">Nucleotide-binding</keyword>
<keyword id="KW-0573">Peptidoglycan synthesis</keyword>
<keyword id="KW-1185">Reference proteome</keyword>
<organism>
    <name type="scientific">Campylobacter jejuni subsp. jejuni serotype O:2 (strain ATCC 700819 / NCTC 11168)</name>
    <dbReference type="NCBI Taxonomy" id="192222"/>
    <lineage>
        <taxon>Bacteria</taxon>
        <taxon>Pseudomonadati</taxon>
        <taxon>Campylobacterota</taxon>
        <taxon>Epsilonproteobacteria</taxon>
        <taxon>Campylobacterales</taxon>
        <taxon>Campylobacteraceae</taxon>
        <taxon>Campylobacter</taxon>
    </lineage>
</organism>
<feature type="chain" id="PRO_0000182073" description="UDP-N-acetylmuramate--L-alanine ligase">
    <location>
        <begin position="1"/>
        <end position="432"/>
    </location>
</feature>
<feature type="binding site" evidence="1">
    <location>
        <begin position="109"/>
        <end position="115"/>
    </location>
    <ligand>
        <name>ATP</name>
        <dbReference type="ChEBI" id="CHEBI:30616"/>
    </ligand>
</feature>